<gene>
    <name evidence="1" type="primary">gatC</name>
    <name type="ordered locus">Mrad2831_0478</name>
</gene>
<keyword id="KW-0067">ATP-binding</keyword>
<keyword id="KW-0436">Ligase</keyword>
<keyword id="KW-0547">Nucleotide-binding</keyword>
<keyword id="KW-0648">Protein biosynthesis</keyword>
<feature type="chain" id="PRO_1000095296" description="Aspartyl/glutamyl-tRNA(Asn/Gln) amidotransferase subunit C">
    <location>
        <begin position="1"/>
        <end position="95"/>
    </location>
</feature>
<protein>
    <recommendedName>
        <fullName evidence="1">Aspartyl/glutamyl-tRNA(Asn/Gln) amidotransferase subunit C</fullName>
        <shortName evidence="1">Asp/Glu-ADT subunit C</shortName>
        <ecNumber evidence="1">6.3.5.-</ecNumber>
    </recommendedName>
</protein>
<accession>B1LUA9</accession>
<reference key="1">
    <citation type="submission" date="2008-03" db="EMBL/GenBank/DDBJ databases">
        <title>Complete sequence of chromosome of Methylobacterium radiotolerans JCM 2831.</title>
        <authorList>
            <consortium name="US DOE Joint Genome Institute"/>
            <person name="Copeland A."/>
            <person name="Lucas S."/>
            <person name="Lapidus A."/>
            <person name="Glavina del Rio T."/>
            <person name="Dalin E."/>
            <person name="Tice H."/>
            <person name="Bruce D."/>
            <person name="Goodwin L."/>
            <person name="Pitluck S."/>
            <person name="Kiss H."/>
            <person name="Brettin T."/>
            <person name="Detter J.C."/>
            <person name="Han C."/>
            <person name="Kuske C.R."/>
            <person name="Schmutz J."/>
            <person name="Larimer F."/>
            <person name="Land M."/>
            <person name="Hauser L."/>
            <person name="Kyrpides N."/>
            <person name="Mikhailova N."/>
            <person name="Marx C.J."/>
            <person name="Richardson P."/>
        </authorList>
    </citation>
    <scope>NUCLEOTIDE SEQUENCE [LARGE SCALE GENOMIC DNA]</scope>
    <source>
        <strain>ATCC 27329 / DSM 1819 / JCM 2831 / NBRC 15690 / NCIMB 10815 / 0-1</strain>
    </source>
</reference>
<organism>
    <name type="scientific">Methylobacterium radiotolerans (strain ATCC 27329 / DSM 1819 / JCM 2831 / NBRC 15690 / NCIMB 10815 / 0-1)</name>
    <dbReference type="NCBI Taxonomy" id="426355"/>
    <lineage>
        <taxon>Bacteria</taxon>
        <taxon>Pseudomonadati</taxon>
        <taxon>Pseudomonadota</taxon>
        <taxon>Alphaproteobacteria</taxon>
        <taxon>Hyphomicrobiales</taxon>
        <taxon>Methylobacteriaceae</taxon>
        <taxon>Methylobacterium</taxon>
    </lineage>
</organism>
<dbReference type="EC" id="6.3.5.-" evidence="1"/>
<dbReference type="EMBL" id="CP001001">
    <property type="protein sequence ID" value="ACB22489.1"/>
    <property type="molecule type" value="Genomic_DNA"/>
</dbReference>
<dbReference type="RefSeq" id="WP_012317485.1">
    <property type="nucleotide sequence ID" value="NC_010505.1"/>
</dbReference>
<dbReference type="SMR" id="B1LUA9"/>
<dbReference type="STRING" id="426355.Mrad2831_0478"/>
<dbReference type="GeneID" id="6136491"/>
<dbReference type="KEGG" id="mrd:Mrad2831_0478"/>
<dbReference type="eggNOG" id="COG0721">
    <property type="taxonomic scope" value="Bacteria"/>
</dbReference>
<dbReference type="HOGENOM" id="CLU_105899_2_0_5"/>
<dbReference type="OrthoDB" id="9794326at2"/>
<dbReference type="Proteomes" id="UP000006589">
    <property type="component" value="Chromosome"/>
</dbReference>
<dbReference type="GO" id="GO:0050566">
    <property type="term" value="F:asparaginyl-tRNA synthase (glutamine-hydrolyzing) activity"/>
    <property type="evidence" value="ECO:0007669"/>
    <property type="project" value="RHEA"/>
</dbReference>
<dbReference type="GO" id="GO:0005524">
    <property type="term" value="F:ATP binding"/>
    <property type="evidence" value="ECO:0007669"/>
    <property type="project" value="UniProtKB-KW"/>
</dbReference>
<dbReference type="GO" id="GO:0050567">
    <property type="term" value="F:glutaminyl-tRNA synthase (glutamine-hydrolyzing) activity"/>
    <property type="evidence" value="ECO:0007669"/>
    <property type="project" value="UniProtKB-UniRule"/>
</dbReference>
<dbReference type="GO" id="GO:0070681">
    <property type="term" value="P:glutaminyl-tRNAGln biosynthesis via transamidation"/>
    <property type="evidence" value="ECO:0007669"/>
    <property type="project" value="TreeGrafter"/>
</dbReference>
<dbReference type="GO" id="GO:0006450">
    <property type="term" value="P:regulation of translational fidelity"/>
    <property type="evidence" value="ECO:0007669"/>
    <property type="project" value="InterPro"/>
</dbReference>
<dbReference type="GO" id="GO:0006412">
    <property type="term" value="P:translation"/>
    <property type="evidence" value="ECO:0007669"/>
    <property type="project" value="UniProtKB-UniRule"/>
</dbReference>
<dbReference type="Gene3D" id="1.10.20.60">
    <property type="entry name" value="Glu-tRNAGln amidotransferase C subunit, N-terminal domain"/>
    <property type="match status" value="1"/>
</dbReference>
<dbReference type="HAMAP" id="MF_00122">
    <property type="entry name" value="GatC"/>
    <property type="match status" value="1"/>
</dbReference>
<dbReference type="InterPro" id="IPR036113">
    <property type="entry name" value="Asp/Glu-ADT_sf_sub_c"/>
</dbReference>
<dbReference type="InterPro" id="IPR003837">
    <property type="entry name" value="GatC"/>
</dbReference>
<dbReference type="NCBIfam" id="TIGR00135">
    <property type="entry name" value="gatC"/>
    <property type="match status" value="1"/>
</dbReference>
<dbReference type="PANTHER" id="PTHR15004">
    <property type="entry name" value="GLUTAMYL-TRNA(GLN) AMIDOTRANSFERASE SUBUNIT C, MITOCHONDRIAL"/>
    <property type="match status" value="1"/>
</dbReference>
<dbReference type="PANTHER" id="PTHR15004:SF0">
    <property type="entry name" value="GLUTAMYL-TRNA(GLN) AMIDOTRANSFERASE SUBUNIT C, MITOCHONDRIAL"/>
    <property type="match status" value="1"/>
</dbReference>
<dbReference type="Pfam" id="PF02686">
    <property type="entry name" value="GatC"/>
    <property type="match status" value="1"/>
</dbReference>
<dbReference type="SUPFAM" id="SSF141000">
    <property type="entry name" value="Glu-tRNAGln amidotransferase C subunit"/>
    <property type="match status" value="1"/>
</dbReference>
<comment type="function">
    <text evidence="1">Allows the formation of correctly charged Asn-tRNA(Asn) or Gln-tRNA(Gln) through the transamidation of misacylated Asp-tRNA(Asn) or Glu-tRNA(Gln) in organisms which lack either or both of asparaginyl-tRNA or glutaminyl-tRNA synthetases. The reaction takes place in the presence of glutamine and ATP through an activated phospho-Asp-tRNA(Asn) or phospho-Glu-tRNA(Gln).</text>
</comment>
<comment type="catalytic activity">
    <reaction evidence="1">
        <text>L-glutamyl-tRNA(Gln) + L-glutamine + ATP + H2O = L-glutaminyl-tRNA(Gln) + L-glutamate + ADP + phosphate + H(+)</text>
        <dbReference type="Rhea" id="RHEA:17521"/>
        <dbReference type="Rhea" id="RHEA-COMP:9681"/>
        <dbReference type="Rhea" id="RHEA-COMP:9684"/>
        <dbReference type="ChEBI" id="CHEBI:15377"/>
        <dbReference type="ChEBI" id="CHEBI:15378"/>
        <dbReference type="ChEBI" id="CHEBI:29985"/>
        <dbReference type="ChEBI" id="CHEBI:30616"/>
        <dbReference type="ChEBI" id="CHEBI:43474"/>
        <dbReference type="ChEBI" id="CHEBI:58359"/>
        <dbReference type="ChEBI" id="CHEBI:78520"/>
        <dbReference type="ChEBI" id="CHEBI:78521"/>
        <dbReference type="ChEBI" id="CHEBI:456216"/>
    </reaction>
</comment>
<comment type="catalytic activity">
    <reaction evidence="1">
        <text>L-aspartyl-tRNA(Asn) + L-glutamine + ATP + H2O = L-asparaginyl-tRNA(Asn) + L-glutamate + ADP + phosphate + 2 H(+)</text>
        <dbReference type="Rhea" id="RHEA:14513"/>
        <dbReference type="Rhea" id="RHEA-COMP:9674"/>
        <dbReference type="Rhea" id="RHEA-COMP:9677"/>
        <dbReference type="ChEBI" id="CHEBI:15377"/>
        <dbReference type="ChEBI" id="CHEBI:15378"/>
        <dbReference type="ChEBI" id="CHEBI:29985"/>
        <dbReference type="ChEBI" id="CHEBI:30616"/>
        <dbReference type="ChEBI" id="CHEBI:43474"/>
        <dbReference type="ChEBI" id="CHEBI:58359"/>
        <dbReference type="ChEBI" id="CHEBI:78515"/>
        <dbReference type="ChEBI" id="CHEBI:78516"/>
        <dbReference type="ChEBI" id="CHEBI:456216"/>
    </reaction>
</comment>
<comment type="subunit">
    <text evidence="1">Heterotrimer of A, B and C subunits.</text>
</comment>
<comment type="similarity">
    <text evidence="1">Belongs to the GatC family.</text>
</comment>
<proteinExistence type="inferred from homology"/>
<name>GATC_METRJ</name>
<sequence>MSVDEKTVRRIAHLARIAVTDDEVGPLQGELNAILAFVEQLGTVDVAGVEPMTSVTPMAMKKREDVVTEGGRAADVVANAPETEDNYFLVPKVVE</sequence>
<evidence type="ECO:0000255" key="1">
    <source>
        <dbReference type="HAMAP-Rule" id="MF_00122"/>
    </source>
</evidence>